<name>YTJA_ECOLI</name>
<feature type="chain" id="PRO_0000256733" description="UPF0391 membrane protein YtjA">
    <location>
        <begin position="1"/>
        <end position="53"/>
    </location>
</feature>
<feature type="transmembrane region" description="Helical" evidence="1">
    <location>
        <begin position="4"/>
        <end position="24"/>
    </location>
</feature>
<feature type="transmembrane region" description="Helical" evidence="1">
    <location>
        <begin position="30"/>
        <end position="48"/>
    </location>
</feature>
<protein>
    <recommendedName>
        <fullName evidence="1">UPF0391 membrane protein YtjA</fullName>
    </recommendedName>
</protein>
<comment type="subcellular location">
    <subcellularLocation>
        <location evidence="1">Cell membrane</location>
        <topology evidence="1">Multi-pass membrane protein</topology>
    </subcellularLocation>
</comment>
<comment type="similarity">
    <text evidence="1">Belongs to the UPF0391 family.</text>
</comment>
<comment type="sequence caution" evidence="2">
    <conflict type="erroneous initiation">
        <sequence resource="EMBL-CDS" id="BAE78365"/>
    </conflict>
</comment>
<accession>Q2M5U1</accession>
<accession>Q2EEU4</accession>
<keyword id="KW-1003">Cell membrane</keyword>
<keyword id="KW-0472">Membrane</keyword>
<keyword id="KW-1185">Reference proteome</keyword>
<keyword id="KW-0812">Transmembrane</keyword>
<keyword id="KW-1133">Transmembrane helix</keyword>
<gene>
    <name evidence="1" type="primary">ytjA</name>
    <name type="ordered locus">b4568</name>
    <name type="ordered locus">JW5891</name>
</gene>
<organism>
    <name type="scientific">Escherichia coli (strain K12)</name>
    <dbReference type="NCBI Taxonomy" id="83333"/>
    <lineage>
        <taxon>Bacteria</taxon>
        <taxon>Pseudomonadati</taxon>
        <taxon>Pseudomonadota</taxon>
        <taxon>Gammaproteobacteria</taxon>
        <taxon>Enterobacterales</taxon>
        <taxon>Enterobacteriaceae</taxon>
        <taxon>Escherichia</taxon>
    </lineage>
</organism>
<evidence type="ECO:0000255" key="1">
    <source>
        <dbReference type="HAMAP-Rule" id="MF_01361"/>
    </source>
</evidence>
<evidence type="ECO:0000305" key="2"/>
<dbReference type="EMBL" id="U00096">
    <property type="protein sequence ID" value="ABD18720.2"/>
    <property type="molecule type" value="Genomic_DNA"/>
</dbReference>
<dbReference type="EMBL" id="AP009048">
    <property type="protein sequence ID" value="BAE78365.1"/>
    <property type="status" value="ALT_INIT"/>
    <property type="molecule type" value="Genomic_DNA"/>
</dbReference>
<dbReference type="RefSeq" id="WP_000490275.1">
    <property type="nucleotide sequence ID" value="NZ_STEB01000033.1"/>
</dbReference>
<dbReference type="RefSeq" id="YP_588479.2">
    <property type="nucleotide sequence ID" value="NC_000913.3"/>
</dbReference>
<dbReference type="FunCoup" id="Q2M5U1">
    <property type="interactions" value="12"/>
</dbReference>
<dbReference type="STRING" id="511145.b4568"/>
<dbReference type="PaxDb" id="511145-b4568"/>
<dbReference type="EnsemblBacteria" id="ABD18720">
    <property type="protein sequence ID" value="ABD18720"/>
    <property type="gene ID" value="b4568"/>
</dbReference>
<dbReference type="GeneID" id="1450298"/>
<dbReference type="KEGG" id="ecj:JW5891"/>
<dbReference type="KEGG" id="eco:b4568"/>
<dbReference type="KEGG" id="ecoc:C3026_23645"/>
<dbReference type="PATRIC" id="fig|511145.12.peg.4522"/>
<dbReference type="eggNOG" id="COG5487">
    <property type="taxonomic scope" value="Bacteria"/>
</dbReference>
<dbReference type="HOGENOM" id="CLU_187346_2_0_6"/>
<dbReference type="InParanoid" id="Q2M5U1"/>
<dbReference type="OMA" id="YWAIVCL"/>
<dbReference type="BioCyc" id="EcoCyc:MONOMER0-2697"/>
<dbReference type="PRO" id="PR:Q2M5U1"/>
<dbReference type="Proteomes" id="UP000000625">
    <property type="component" value="Chromosome"/>
</dbReference>
<dbReference type="GO" id="GO:0005886">
    <property type="term" value="C:plasma membrane"/>
    <property type="evidence" value="ECO:0007669"/>
    <property type="project" value="UniProtKB-SubCell"/>
</dbReference>
<dbReference type="HAMAP" id="MF_01361">
    <property type="entry name" value="UPF0391"/>
    <property type="match status" value="1"/>
</dbReference>
<dbReference type="InterPro" id="IPR009760">
    <property type="entry name" value="DUF1328"/>
</dbReference>
<dbReference type="NCBIfam" id="NF010229">
    <property type="entry name" value="PRK13682.1-4"/>
    <property type="match status" value="1"/>
</dbReference>
<dbReference type="NCBIfam" id="NF010230">
    <property type="entry name" value="PRK13682.1-5"/>
    <property type="match status" value="1"/>
</dbReference>
<dbReference type="Pfam" id="PF07043">
    <property type="entry name" value="DUF1328"/>
    <property type="match status" value="1"/>
</dbReference>
<dbReference type="PIRSF" id="PIRSF036466">
    <property type="entry name" value="UCP036466"/>
    <property type="match status" value="1"/>
</dbReference>
<proteinExistence type="inferred from homology"/>
<sequence>MFRWGIIFLVIALIAAALGFGGLAGTAAGAAKIVFVVGIILFLVSLFMGRKRP</sequence>
<reference key="1">
    <citation type="journal article" date="1997" name="Science">
        <title>The complete genome sequence of Escherichia coli K-12.</title>
        <authorList>
            <person name="Blattner F.R."/>
            <person name="Plunkett G. III"/>
            <person name="Bloch C.A."/>
            <person name="Perna N.T."/>
            <person name="Burland V."/>
            <person name="Riley M."/>
            <person name="Collado-Vides J."/>
            <person name="Glasner J.D."/>
            <person name="Rode C.K."/>
            <person name="Mayhew G.F."/>
            <person name="Gregor J."/>
            <person name="Davis N.W."/>
            <person name="Kirkpatrick H.A."/>
            <person name="Goeden M.A."/>
            <person name="Rose D.J."/>
            <person name="Mau B."/>
            <person name="Shao Y."/>
        </authorList>
    </citation>
    <scope>NUCLEOTIDE SEQUENCE [LARGE SCALE GENOMIC DNA]</scope>
    <source>
        <strain>K12 / MG1655 / ATCC 47076</strain>
    </source>
</reference>
<reference key="2">
    <citation type="journal article" date="2006" name="Mol. Syst. Biol.">
        <title>Highly accurate genome sequences of Escherichia coli K-12 strains MG1655 and W3110.</title>
        <authorList>
            <person name="Hayashi K."/>
            <person name="Morooka N."/>
            <person name="Yamamoto Y."/>
            <person name="Fujita K."/>
            <person name="Isono K."/>
            <person name="Choi S."/>
            <person name="Ohtsubo E."/>
            <person name="Baba T."/>
            <person name="Wanner B.L."/>
            <person name="Mori H."/>
            <person name="Horiuchi T."/>
        </authorList>
    </citation>
    <scope>NUCLEOTIDE SEQUENCE [LARGE SCALE GENOMIC DNA]</scope>
    <source>
        <strain>K12 / W3110 / ATCC 27325 / DSM 5911</strain>
    </source>
</reference>
<reference key="3">
    <citation type="journal article" date="2001" name="Genes Dev.">
        <title>Identification of novel small RNAs using comparative genomics and microarrays.</title>
        <authorList>
            <person name="Wassarman K.M."/>
            <person name="Repoila F."/>
            <person name="Rosenow C."/>
            <person name="Storz G."/>
            <person name="Gottesman S."/>
        </authorList>
    </citation>
    <scope>IDENTIFICATION</scope>
    <source>
        <strain>K12 / MG1655 / ATCC 47076</strain>
    </source>
</reference>